<gene>
    <name evidence="2" type="primary">cysN</name>
    <name type="ordered locus">YE0763</name>
</gene>
<reference key="1">
    <citation type="journal article" date="2006" name="PLoS Genet.">
        <title>The complete genome sequence and comparative genome analysis of the high pathogenicity Yersinia enterocolitica strain 8081.</title>
        <authorList>
            <person name="Thomson N.R."/>
            <person name="Howard S."/>
            <person name="Wren B.W."/>
            <person name="Holden M.T.G."/>
            <person name="Crossman L."/>
            <person name="Challis G.L."/>
            <person name="Churcher C."/>
            <person name="Mungall K."/>
            <person name="Brooks K."/>
            <person name="Chillingworth T."/>
            <person name="Feltwell T."/>
            <person name="Abdellah Z."/>
            <person name="Hauser H."/>
            <person name="Jagels K."/>
            <person name="Maddison M."/>
            <person name="Moule S."/>
            <person name="Sanders M."/>
            <person name="Whitehead S."/>
            <person name="Quail M.A."/>
            <person name="Dougan G."/>
            <person name="Parkhill J."/>
            <person name="Prentice M.B."/>
        </authorList>
    </citation>
    <scope>NUCLEOTIDE SEQUENCE [LARGE SCALE GENOMIC DNA]</scope>
    <source>
        <strain>NCTC 13174 / 8081</strain>
    </source>
</reference>
<organism>
    <name type="scientific">Yersinia enterocolitica serotype O:8 / biotype 1B (strain NCTC 13174 / 8081)</name>
    <dbReference type="NCBI Taxonomy" id="393305"/>
    <lineage>
        <taxon>Bacteria</taxon>
        <taxon>Pseudomonadati</taxon>
        <taxon>Pseudomonadota</taxon>
        <taxon>Gammaproteobacteria</taxon>
        <taxon>Enterobacterales</taxon>
        <taxon>Yersiniaceae</taxon>
        <taxon>Yersinia</taxon>
    </lineage>
</organism>
<keyword id="KW-0067">ATP-binding</keyword>
<keyword id="KW-0342">GTP-binding</keyword>
<keyword id="KW-0547">Nucleotide-binding</keyword>
<keyword id="KW-0548">Nucleotidyltransferase</keyword>
<keyword id="KW-0808">Transferase</keyword>
<protein>
    <recommendedName>
        <fullName evidence="2">Sulfate adenylyltransferase subunit 1</fullName>
        <ecNumber evidence="2">2.7.7.4</ecNumber>
    </recommendedName>
    <alternativeName>
        <fullName evidence="2">ATP-sulfurylase large subunit</fullName>
    </alternativeName>
    <alternativeName>
        <fullName evidence="2">Sulfate adenylate transferase</fullName>
        <shortName evidence="2">SAT</shortName>
    </alternativeName>
</protein>
<comment type="function">
    <text evidence="2">With CysD forms the ATP sulfurylase (ATPS) that catalyzes the adenylation of sulfate producing adenosine 5'-phosphosulfate (APS) and diphosphate, the first enzymatic step in sulfur assimilation pathway. APS synthesis involves the formation of a high-energy phosphoric-sulfuric acid anhydride bond driven by GTP hydrolysis by CysN coupled to ATP hydrolysis by CysD.</text>
</comment>
<comment type="catalytic activity">
    <reaction evidence="2">
        <text>sulfate + ATP + H(+) = adenosine 5'-phosphosulfate + diphosphate</text>
        <dbReference type="Rhea" id="RHEA:18133"/>
        <dbReference type="ChEBI" id="CHEBI:15378"/>
        <dbReference type="ChEBI" id="CHEBI:16189"/>
        <dbReference type="ChEBI" id="CHEBI:30616"/>
        <dbReference type="ChEBI" id="CHEBI:33019"/>
        <dbReference type="ChEBI" id="CHEBI:58243"/>
        <dbReference type="EC" id="2.7.7.4"/>
    </reaction>
</comment>
<comment type="pathway">
    <text evidence="2">Sulfur metabolism; hydrogen sulfide biosynthesis; sulfite from sulfate: step 1/3.</text>
</comment>
<comment type="subunit">
    <text evidence="2">Heterodimer composed of CysD, the smaller subunit, and CysN.</text>
</comment>
<comment type="similarity">
    <text evidence="2">Belongs to the TRAFAC class translation factor GTPase superfamily. Classic translation factor GTPase family. CysN/NodQ subfamily.</text>
</comment>
<proteinExistence type="inferred from homology"/>
<evidence type="ECO:0000250" key="1"/>
<evidence type="ECO:0000255" key="2">
    <source>
        <dbReference type="HAMAP-Rule" id="MF_00062"/>
    </source>
</evidence>
<accession>A1JJT0</accession>
<dbReference type="EC" id="2.7.7.4" evidence="2"/>
<dbReference type="EMBL" id="AM286415">
    <property type="protein sequence ID" value="CAL10867.1"/>
    <property type="molecule type" value="Genomic_DNA"/>
</dbReference>
<dbReference type="RefSeq" id="YP_001005106.1">
    <property type="nucleotide sequence ID" value="NC_008800.1"/>
</dbReference>
<dbReference type="SMR" id="A1JJT0"/>
<dbReference type="KEGG" id="yen:YE0763"/>
<dbReference type="PATRIC" id="fig|393305.7.peg.857"/>
<dbReference type="eggNOG" id="COG2895">
    <property type="taxonomic scope" value="Bacteria"/>
</dbReference>
<dbReference type="HOGENOM" id="CLU_007265_5_2_6"/>
<dbReference type="OrthoDB" id="9804504at2"/>
<dbReference type="UniPathway" id="UPA00140">
    <property type="reaction ID" value="UER00204"/>
</dbReference>
<dbReference type="Proteomes" id="UP000000642">
    <property type="component" value="Chromosome"/>
</dbReference>
<dbReference type="GO" id="GO:0005524">
    <property type="term" value="F:ATP binding"/>
    <property type="evidence" value="ECO:0007669"/>
    <property type="project" value="UniProtKB-KW"/>
</dbReference>
<dbReference type="GO" id="GO:0005525">
    <property type="term" value="F:GTP binding"/>
    <property type="evidence" value="ECO:0007669"/>
    <property type="project" value="UniProtKB-UniRule"/>
</dbReference>
<dbReference type="GO" id="GO:0003924">
    <property type="term" value="F:GTPase activity"/>
    <property type="evidence" value="ECO:0007669"/>
    <property type="project" value="InterPro"/>
</dbReference>
<dbReference type="GO" id="GO:0004781">
    <property type="term" value="F:sulfate adenylyltransferase (ATP) activity"/>
    <property type="evidence" value="ECO:0007669"/>
    <property type="project" value="UniProtKB-UniRule"/>
</dbReference>
<dbReference type="GO" id="GO:0070814">
    <property type="term" value="P:hydrogen sulfide biosynthetic process"/>
    <property type="evidence" value="ECO:0007669"/>
    <property type="project" value="UniProtKB-UniRule"/>
</dbReference>
<dbReference type="GO" id="GO:0000103">
    <property type="term" value="P:sulfate assimilation"/>
    <property type="evidence" value="ECO:0007669"/>
    <property type="project" value="UniProtKB-UniRule"/>
</dbReference>
<dbReference type="CDD" id="cd04166">
    <property type="entry name" value="CysN_ATPS"/>
    <property type="match status" value="1"/>
</dbReference>
<dbReference type="CDD" id="cd03695">
    <property type="entry name" value="CysN_NodQ_II"/>
    <property type="match status" value="1"/>
</dbReference>
<dbReference type="CDD" id="cd04095">
    <property type="entry name" value="CysN_NoDQ_III"/>
    <property type="match status" value="1"/>
</dbReference>
<dbReference type="FunFam" id="2.40.30.10:FF:000027">
    <property type="entry name" value="Sulfate adenylyltransferase subunit 1"/>
    <property type="match status" value="1"/>
</dbReference>
<dbReference type="FunFam" id="2.40.30.10:FF:000031">
    <property type="entry name" value="Sulfate adenylyltransferase subunit 1"/>
    <property type="match status" value="1"/>
</dbReference>
<dbReference type="FunFam" id="3.40.50.300:FF:000119">
    <property type="entry name" value="Sulfate adenylyltransferase subunit 1"/>
    <property type="match status" value="1"/>
</dbReference>
<dbReference type="Gene3D" id="3.40.50.300">
    <property type="entry name" value="P-loop containing nucleotide triphosphate hydrolases"/>
    <property type="match status" value="1"/>
</dbReference>
<dbReference type="Gene3D" id="2.40.30.10">
    <property type="entry name" value="Translation factors"/>
    <property type="match status" value="2"/>
</dbReference>
<dbReference type="HAMAP" id="MF_00062">
    <property type="entry name" value="Sulf_adenylyltr_sub1"/>
    <property type="match status" value="1"/>
</dbReference>
<dbReference type="InterPro" id="IPR041757">
    <property type="entry name" value="CysN_GTP-bd"/>
</dbReference>
<dbReference type="InterPro" id="IPR044138">
    <property type="entry name" value="CysN_II"/>
</dbReference>
<dbReference type="InterPro" id="IPR044139">
    <property type="entry name" value="CysN_NoDQ_III"/>
</dbReference>
<dbReference type="InterPro" id="IPR031157">
    <property type="entry name" value="G_TR_CS"/>
</dbReference>
<dbReference type="InterPro" id="IPR054696">
    <property type="entry name" value="GTP-eEF1A_C"/>
</dbReference>
<dbReference type="InterPro" id="IPR027417">
    <property type="entry name" value="P-loop_NTPase"/>
</dbReference>
<dbReference type="InterPro" id="IPR005225">
    <property type="entry name" value="Small_GTP-bd"/>
</dbReference>
<dbReference type="InterPro" id="IPR011779">
    <property type="entry name" value="SO4_adenylTrfase_lsu"/>
</dbReference>
<dbReference type="InterPro" id="IPR000795">
    <property type="entry name" value="T_Tr_GTP-bd_dom"/>
</dbReference>
<dbReference type="InterPro" id="IPR050100">
    <property type="entry name" value="TRAFAC_GTPase_members"/>
</dbReference>
<dbReference type="InterPro" id="IPR009000">
    <property type="entry name" value="Transl_B-barrel_sf"/>
</dbReference>
<dbReference type="InterPro" id="IPR009001">
    <property type="entry name" value="Transl_elong_EF1A/Init_IF2_C"/>
</dbReference>
<dbReference type="NCBIfam" id="TIGR02034">
    <property type="entry name" value="CysN"/>
    <property type="match status" value="1"/>
</dbReference>
<dbReference type="NCBIfam" id="NF003478">
    <property type="entry name" value="PRK05124.1"/>
    <property type="match status" value="1"/>
</dbReference>
<dbReference type="NCBIfam" id="TIGR00231">
    <property type="entry name" value="small_GTP"/>
    <property type="match status" value="1"/>
</dbReference>
<dbReference type="PANTHER" id="PTHR23115">
    <property type="entry name" value="TRANSLATION FACTOR"/>
    <property type="match status" value="1"/>
</dbReference>
<dbReference type="Pfam" id="PF22594">
    <property type="entry name" value="GTP-eEF1A_C"/>
    <property type="match status" value="1"/>
</dbReference>
<dbReference type="Pfam" id="PF00009">
    <property type="entry name" value="GTP_EFTU"/>
    <property type="match status" value="1"/>
</dbReference>
<dbReference type="PRINTS" id="PR00315">
    <property type="entry name" value="ELONGATNFCT"/>
</dbReference>
<dbReference type="SUPFAM" id="SSF50465">
    <property type="entry name" value="EF-Tu/eEF-1alpha/eIF2-gamma C-terminal domain"/>
    <property type="match status" value="1"/>
</dbReference>
<dbReference type="SUPFAM" id="SSF52540">
    <property type="entry name" value="P-loop containing nucleoside triphosphate hydrolases"/>
    <property type="match status" value="1"/>
</dbReference>
<dbReference type="SUPFAM" id="SSF50447">
    <property type="entry name" value="Translation proteins"/>
    <property type="match status" value="1"/>
</dbReference>
<dbReference type="PROSITE" id="PS00301">
    <property type="entry name" value="G_TR_1"/>
    <property type="match status" value="1"/>
</dbReference>
<dbReference type="PROSITE" id="PS51722">
    <property type="entry name" value="G_TR_2"/>
    <property type="match status" value="1"/>
</dbReference>
<name>CYSN_YERE8</name>
<sequence length="478" mass="53050">MILQNNSIAQQIANEGGVEAYLHAQQHKTMLRFLTCGSVDDGKSTLIGRLLHDTRQIYEDQLTTLHTDSKRLGTQGEKLDLALLVDGLQAEREQGITIDVAYRYFSTEQRKFIIADTPGHEQYTRNMATGASTCDLAILLIDARKGVLDQTRRHSFIATLLGIRHLVVAVNKMDLVDYQESVFEQFKQDYLSFAQQLPTDLDIKFVPLSALDGDNVASPSEKMNWYSGPTLLEVLESVDVVNASRQQPLRFPVQYVNRPNLDFRGYAGTLSAGIVRVGQKIKVLPSGVESTVARIVTFDGDLTQAGPGEAITLVLTDEVDISRGDLLVDASETLQAAQNALVDVVWMAEQPLVAGQSYDIKIAGKKTRARVENIQYQVEINSLTQRVVESLPLNGIGLVELAFDEPLVLDSYQRNRDTGGMIFIDRLSNVTVGAGLIRETLESVYQENTEFSAFELELNALVRRHFPHWGARDLLGGK</sequence>
<feature type="chain" id="PRO_1000092165" description="Sulfate adenylyltransferase subunit 1">
    <location>
        <begin position="1"/>
        <end position="478"/>
    </location>
</feature>
<feature type="domain" description="tr-type G">
    <location>
        <begin position="28"/>
        <end position="244"/>
    </location>
</feature>
<feature type="region of interest" description="G1" evidence="1">
    <location>
        <begin position="37"/>
        <end position="44"/>
    </location>
</feature>
<feature type="region of interest" description="G2" evidence="1">
    <location>
        <begin position="95"/>
        <end position="99"/>
    </location>
</feature>
<feature type="region of interest" description="G3" evidence="1">
    <location>
        <begin position="116"/>
        <end position="119"/>
    </location>
</feature>
<feature type="region of interest" description="G4" evidence="1">
    <location>
        <begin position="171"/>
        <end position="174"/>
    </location>
</feature>
<feature type="region of interest" description="G5" evidence="1">
    <location>
        <begin position="209"/>
        <end position="211"/>
    </location>
</feature>
<feature type="binding site" evidence="2">
    <location>
        <begin position="37"/>
        <end position="44"/>
    </location>
    <ligand>
        <name>GTP</name>
        <dbReference type="ChEBI" id="CHEBI:37565"/>
    </ligand>
</feature>
<feature type="binding site" evidence="2">
    <location>
        <begin position="116"/>
        <end position="120"/>
    </location>
    <ligand>
        <name>GTP</name>
        <dbReference type="ChEBI" id="CHEBI:37565"/>
    </ligand>
</feature>
<feature type="binding site" evidence="2">
    <location>
        <begin position="171"/>
        <end position="174"/>
    </location>
    <ligand>
        <name>GTP</name>
        <dbReference type="ChEBI" id="CHEBI:37565"/>
    </ligand>
</feature>